<name>DAAF1_CHLRE</name>
<dbReference type="EMBL" id="DQ886489">
    <property type="protein sequence ID" value="ABI63572.1"/>
    <property type="molecule type" value="mRNA"/>
</dbReference>
<dbReference type="EMBL" id="DS496108">
    <property type="protein sequence ID" value="EDP09771.1"/>
    <property type="status" value="ALT_SEQ"/>
    <property type="molecule type" value="Genomic_DNA"/>
</dbReference>
<dbReference type="RefSeq" id="XP_001690033.1">
    <property type="nucleotide sequence ID" value="XM_001689981.1"/>
</dbReference>
<dbReference type="SMR" id="Q09JZ4"/>
<dbReference type="PaxDb" id="3055-EDP09771"/>
<dbReference type="EnsemblPlants" id="PNW88430">
    <property type="protein sequence ID" value="PNW88430"/>
    <property type="gene ID" value="CHLRE_01g029150v5"/>
</dbReference>
<dbReference type="GeneID" id="5715340"/>
<dbReference type="Gramene" id="PNW88430">
    <property type="protein sequence ID" value="PNW88430"/>
    <property type="gene ID" value="CHLRE_01g029150v5"/>
</dbReference>
<dbReference type="KEGG" id="cre:CHLRE_01g029150v5"/>
<dbReference type="eggNOG" id="ENOG502QQFE">
    <property type="taxonomic scope" value="Eukaryota"/>
</dbReference>
<dbReference type="HOGENOM" id="CLU_040741_1_0_1"/>
<dbReference type="OrthoDB" id="1904536at2759"/>
<dbReference type="GO" id="GO:0044297">
    <property type="term" value="C:cell body"/>
    <property type="evidence" value="ECO:0000314"/>
    <property type="project" value="BHF-UCL"/>
</dbReference>
<dbReference type="GO" id="GO:0005929">
    <property type="term" value="C:cilium"/>
    <property type="evidence" value="ECO:0007669"/>
    <property type="project" value="UniProtKB-KW"/>
</dbReference>
<dbReference type="GO" id="GO:0005737">
    <property type="term" value="C:cytoplasm"/>
    <property type="evidence" value="ECO:0000314"/>
    <property type="project" value="BHF-UCL"/>
</dbReference>
<dbReference type="GO" id="GO:0005856">
    <property type="term" value="C:cytoskeleton"/>
    <property type="evidence" value="ECO:0007669"/>
    <property type="project" value="UniProtKB-KW"/>
</dbReference>
<dbReference type="GO" id="GO:0070286">
    <property type="term" value="P:axonemal dynein complex assembly"/>
    <property type="evidence" value="ECO:0000315"/>
    <property type="project" value="BHF-UCL"/>
</dbReference>
<dbReference type="GO" id="GO:0003341">
    <property type="term" value="P:cilium movement"/>
    <property type="evidence" value="ECO:0000315"/>
    <property type="project" value="BHF-UCL"/>
</dbReference>
<dbReference type="GO" id="GO:2000155">
    <property type="term" value="P:positive regulation of cilium-dependent cell motility"/>
    <property type="evidence" value="ECO:0000315"/>
    <property type="project" value="BHF-UCL"/>
</dbReference>
<dbReference type="GO" id="GO:0033365">
    <property type="term" value="P:protein localization to organelle"/>
    <property type="evidence" value="ECO:0000315"/>
    <property type="project" value="BHF-UCL"/>
</dbReference>
<dbReference type="GO" id="GO:0003356">
    <property type="term" value="P:regulation of cilium beat frequency"/>
    <property type="evidence" value="ECO:0000315"/>
    <property type="project" value="BHF-UCL"/>
</dbReference>
<dbReference type="Gene3D" id="3.80.10.10">
    <property type="entry name" value="Ribonuclease Inhibitor"/>
    <property type="match status" value="2"/>
</dbReference>
<dbReference type="InterPro" id="IPR050576">
    <property type="entry name" value="Cilia_flagella_integrity"/>
</dbReference>
<dbReference type="InterPro" id="IPR001611">
    <property type="entry name" value="Leu-rich_rpt"/>
</dbReference>
<dbReference type="InterPro" id="IPR032675">
    <property type="entry name" value="LRR_dom_sf"/>
</dbReference>
<dbReference type="PANTHER" id="PTHR45973:SF9">
    <property type="entry name" value="LEUCINE-RICH REPEAT-CONTAINING PROTEIN 46"/>
    <property type="match status" value="1"/>
</dbReference>
<dbReference type="PANTHER" id="PTHR45973">
    <property type="entry name" value="PROTEIN PHOSPHATASE 1 REGULATORY SUBUNIT SDS22-RELATED"/>
    <property type="match status" value="1"/>
</dbReference>
<dbReference type="Pfam" id="PF14580">
    <property type="entry name" value="LRR_9"/>
    <property type="match status" value="1"/>
</dbReference>
<dbReference type="SMART" id="SM00365">
    <property type="entry name" value="LRR_SD22"/>
    <property type="match status" value="3"/>
</dbReference>
<dbReference type="SUPFAM" id="SSF52075">
    <property type="entry name" value="Outer arm dynein light chain 1"/>
    <property type="match status" value="1"/>
</dbReference>
<dbReference type="PROSITE" id="PS51450">
    <property type="entry name" value="LRR"/>
    <property type="match status" value="6"/>
</dbReference>
<feature type="chain" id="PRO_0000363967" description="Leucine-rich repeat-containing protein ODA7">
    <location>
        <begin position="1"/>
        <end position="432"/>
    </location>
</feature>
<feature type="repeat" description="LRR 1">
    <location>
        <begin position="47"/>
        <end position="68"/>
    </location>
</feature>
<feature type="repeat" description="LRR 2">
    <location>
        <begin position="69"/>
        <end position="90"/>
    </location>
</feature>
<feature type="repeat" description="LRR 3">
    <location>
        <begin position="91"/>
        <end position="112"/>
    </location>
</feature>
<feature type="repeat" description="LRR 4">
    <location>
        <begin position="113"/>
        <end position="134"/>
    </location>
</feature>
<feature type="repeat" description="LRR 5">
    <location>
        <begin position="138"/>
        <end position="159"/>
    </location>
</feature>
<feature type="domain" description="LRRCT">
    <location>
        <begin position="173"/>
        <end position="211"/>
    </location>
</feature>
<feature type="region of interest" description="Disordered" evidence="2">
    <location>
        <begin position="297"/>
        <end position="332"/>
    </location>
</feature>
<feature type="region of interest" description="Disordered" evidence="2">
    <location>
        <begin position="368"/>
        <end position="432"/>
    </location>
</feature>
<feature type="coiled-coil region" evidence="1">
    <location>
        <begin position="212"/>
        <end position="243"/>
    </location>
</feature>
<feature type="compositionally biased region" description="Low complexity" evidence="2">
    <location>
        <begin position="323"/>
        <end position="332"/>
    </location>
</feature>
<feature type="compositionally biased region" description="Low complexity" evidence="2">
    <location>
        <begin position="407"/>
        <end position="425"/>
    </location>
</feature>
<protein>
    <recommendedName>
        <fullName>Leucine-rich repeat-containing protein ODA7</fullName>
    </recommendedName>
    <alternativeName>
        <fullName>Dynein assembly factor 1, axonemal homolog</fullName>
    </alternativeName>
    <alternativeName>
        <fullName>Leucine-rich repeat-containing protein 50 homolog</fullName>
    </alternativeName>
    <alternativeName>
        <fullName>Outer row dynein-assembly protein 7</fullName>
    </alternativeName>
</protein>
<accession>Q09JZ4</accession>
<accession>A8HQD4</accession>
<comment type="function">
    <text evidence="3">Cilium-specific protein required for cilia structures. Axonemal dynein-associated protein that participates in a structural link between inner and outer row dyneins.</text>
</comment>
<comment type="subunit">
    <text evidence="3">Interacts with both outer row and I1 inner row dyneins.</text>
</comment>
<comment type="subcellular location">
    <subcellularLocation>
        <location evidence="3">Cytoplasm</location>
        <location evidence="3">Cytoskeleton</location>
        <location evidence="3">Cilium axoneme</location>
    </subcellularLocation>
</comment>
<comment type="disruption phenotype">
    <text evidence="3">Absence of outer row dynein and a reduced flagellar beat. Axonemal outer row dynein assembly is prevented by blocking association of heavy chains and intermediate chains in the cytoplasm.</text>
</comment>
<comment type="similarity">
    <text evidence="4">Belongs to the DNAAF1 family.</text>
</comment>
<comment type="sequence caution" evidence="4">
    <conflict type="erroneous gene model prediction">
        <sequence resource="EMBL-CDS" id="EDP09771"/>
    </conflict>
</comment>
<proteinExistence type="evidence at protein level"/>
<evidence type="ECO:0000255" key="1"/>
<evidence type="ECO:0000256" key="2">
    <source>
        <dbReference type="SAM" id="MobiDB-lite"/>
    </source>
</evidence>
<evidence type="ECO:0000269" key="3">
    <source>
    </source>
</evidence>
<evidence type="ECO:0000305" key="4"/>
<keyword id="KW-0966">Cell projection</keyword>
<keyword id="KW-0969">Cilium</keyword>
<keyword id="KW-0175">Coiled coil</keyword>
<keyword id="KW-0963">Cytoplasm</keyword>
<keyword id="KW-0206">Cytoskeleton</keyword>
<keyword id="KW-0433">Leucine-rich repeat</keyword>
<keyword id="KW-0677">Repeat</keyword>
<organism>
    <name type="scientific">Chlamydomonas reinhardtii</name>
    <name type="common">Chlamydomonas smithii</name>
    <dbReference type="NCBI Taxonomy" id="3055"/>
    <lineage>
        <taxon>Eukaryota</taxon>
        <taxon>Viridiplantae</taxon>
        <taxon>Chlorophyta</taxon>
        <taxon>core chlorophytes</taxon>
        <taxon>Chlorophyceae</taxon>
        <taxon>CS clade</taxon>
        <taxon>Chlamydomonadales</taxon>
        <taxon>Chlamydomonadaceae</taxon>
        <taxon>Chlamydomonas</taxon>
    </lineage>
</organism>
<sequence>MCACMTKEALLEVCKQNGLYRTASLNDKLYCNFKGFSQIACLEDYVNLKALFLEGNVLETLEGLPPLADLKCLYVQQNCIWKISGLEAVPGLDTLNISNNQLTKLEGLACCPALRTLIATHNHLVTLDSVAHLAECKALQTLDLQNNELEDPGIVDILKQIPDLRCLYLKGNPVVSNIKNYRKVLVTSIPSLTYLDDRPVFDNERKIAQAWLEGGLEGERAMRNQLKEEEEERSRKNHEFMMQMRAAGWRERRKRMGLPDGDTDPALDDMSDGEYEFDEEPEELVEARQRLAAYTARPGEEEPAELASARQGLARDGKPIQEGAWGSGAAAESDSAIYLQSVKAAQAELDVVRQQQPRQLPTAQVLIEELDEPCGGKAPAADEGSTPPALSPMTSPSGSEGQGGEGVAAAKKGAASGAAEGISAAVDINDLD</sequence>
<gene>
    <name type="primary">ODA7</name>
    <name type="ORF">CHLREDRAFT_116664</name>
</gene>
<reference key="1">
    <citation type="journal article" date="2007" name="J. Biol. Chem.">
        <title>Chlamydomonas flagellar outer row dynein assembly protein ODA7 interacts with both outer row and I1 inner row dyneins.</title>
        <authorList>
            <person name="Freshour J."/>
            <person name="Yokoyama R."/>
            <person name="Mitchell D.R."/>
        </authorList>
    </citation>
    <scope>NUCLEOTIDE SEQUENCE [MRNA]</scope>
    <scope>FUNCTION</scope>
    <scope>SUBCELLULAR LOCATION</scope>
    <scope>DISRUPTION PHENOTYPE</scope>
    <scope>INTERACTION WITH DYNEINS</scope>
</reference>
<reference key="2">
    <citation type="journal article" date="2007" name="Science">
        <title>The Chlamydomonas genome reveals the evolution of key animal and plant functions.</title>
        <authorList>
            <person name="Merchant S.S."/>
            <person name="Prochnik S.E."/>
            <person name="Vallon O."/>
            <person name="Harris E.H."/>
            <person name="Karpowicz S.J."/>
            <person name="Witman G.B."/>
            <person name="Terry A."/>
            <person name="Salamov A."/>
            <person name="Fritz-Laylin L.K."/>
            <person name="Marechal-Drouard L."/>
            <person name="Marshall W.F."/>
            <person name="Qu L.H."/>
            <person name="Nelson D.R."/>
            <person name="Sanderfoot A.A."/>
            <person name="Spalding M.H."/>
            <person name="Kapitonov V.V."/>
            <person name="Ren Q."/>
            <person name="Ferris P."/>
            <person name="Lindquist E."/>
            <person name="Shapiro H."/>
            <person name="Lucas S.M."/>
            <person name="Grimwood J."/>
            <person name="Schmutz J."/>
            <person name="Cardol P."/>
            <person name="Cerutti H."/>
            <person name="Chanfreau G."/>
            <person name="Chen C.L."/>
            <person name="Cognat V."/>
            <person name="Croft M.T."/>
            <person name="Dent R."/>
            <person name="Dutcher S."/>
            <person name="Fernandez E."/>
            <person name="Fukuzawa H."/>
            <person name="Gonzalez-Ballester D."/>
            <person name="Gonzalez-Halphen D."/>
            <person name="Hallmann A."/>
            <person name="Hanikenne M."/>
            <person name="Hippler M."/>
            <person name="Inwood W."/>
            <person name="Jabbari K."/>
            <person name="Kalanon M."/>
            <person name="Kuras R."/>
            <person name="Lefebvre P.A."/>
            <person name="Lemaire S.D."/>
            <person name="Lobanov A.V."/>
            <person name="Lohr M."/>
            <person name="Manuell A."/>
            <person name="Meier I."/>
            <person name="Mets L."/>
            <person name="Mittag M."/>
            <person name="Mittelmeier T."/>
            <person name="Moroney J.V."/>
            <person name="Moseley J."/>
            <person name="Napoli C."/>
            <person name="Nedelcu A.M."/>
            <person name="Niyogi K."/>
            <person name="Novoselov S.V."/>
            <person name="Paulsen I.T."/>
            <person name="Pazour G.J."/>
            <person name="Purton S."/>
            <person name="Ral J.P."/>
            <person name="Riano-Pachon D.M."/>
            <person name="Riekhof W."/>
            <person name="Rymarquis L."/>
            <person name="Schroda M."/>
            <person name="Stern D."/>
            <person name="Umen J."/>
            <person name="Willows R."/>
            <person name="Wilson N."/>
            <person name="Zimmer S.L."/>
            <person name="Allmer J."/>
            <person name="Balk J."/>
            <person name="Bisova K."/>
            <person name="Chen C.J."/>
            <person name="Elias M."/>
            <person name="Gendler K."/>
            <person name="Hauser C."/>
            <person name="Lamb M.R."/>
            <person name="Ledford H."/>
            <person name="Long J.C."/>
            <person name="Minagawa J."/>
            <person name="Page M.D."/>
            <person name="Pan J."/>
            <person name="Pootakham W."/>
            <person name="Roje S."/>
            <person name="Rose A."/>
            <person name="Stahlberg E."/>
            <person name="Terauchi A.M."/>
            <person name="Yang P."/>
            <person name="Ball S."/>
            <person name="Bowler C."/>
            <person name="Dieckmann C.L."/>
            <person name="Gladyshev V.N."/>
            <person name="Green P."/>
            <person name="Jorgensen R."/>
            <person name="Mayfield S."/>
            <person name="Mueller-Roeber B."/>
            <person name="Rajamani S."/>
            <person name="Sayre R.T."/>
            <person name="Brokstein P."/>
            <person name="Dubchak I."/>
            <person name="Goodstein D."/>
            <person name="Hornick L."/>
            <person name="Huang Y.W."/>
            <person name="Jhaveri J."/>
            <person name="Luo Y."/>
            <person name="Martinez D."/>
            <person name="Ngau W.C."/>
            <person name="Otillar B."/>
            <person name="Poliakov A."/>
            <person name="Porter A."/>
            <person name="Szajkowski L."/>
            <person name="Werner G."/>
            <person name="Zhou K."/>
            <person name="Grigoriev I.V."/>
            <person name="Rokhsar D.S."/>
            <person name="Grossman A.R."/>
        </authorList>
    </citation>
    <scope>NUCLEOTIDE SEQUENCE [LARGE SCALE GENOMIC DNA]</scope>
    <source>
        <strain>CC-503</strain>
        <strain>cw92</strain>
    </source>
</reference>